<comment type="function">
    <text evidence="1">Required for respiratory activity and maintenance and expression of the mitochondrial genome.</text>
</comment>
<comment type="subcellular location">
    <subcellularLocation>
        <location evidence="1">Mitochondrion</location>
    </subcellularLocation>
</comment>
<comment type="similarity">
    <text evidence="4">Belongs to the RRG9 family.</text>
</comment>
<evidence type="ECO:0000250" key="1"/>
<evidence type="ECO:0000255" key="2"/>
<evidence type="ECO:0000256" key="3">
    <source>
        <dbReference type="SAM" id="MobiDB-lite"/>
    </source>
</evidence>
<evidence type="ECO:0000305" key="4"/>
<organism>
    <name type="scientific">Sclerotinia sclerotiorum (strain ATCC 18683 / 1980 / Ss-1)</name>
    <name type="common">White mold</name>
    <name type="synonym">Whetzelinia sclerotiorum</name>
    <dbReference type="NCBI Taxonomy" id="665079"/>
    <lineage>
        <taxon>Eukaryota</taxon>
        <taxon>Fungi</taxon>
        <taxon>Dikarya</taxon>
        <taxon>Ascomycota</taxon>
        <taxon>Pezizomycotina</taxon>
        <taxon>Leotiomycetes</taxon>
        <taxon>Helotiales</taxon>
        <taxon>Sclerotiniaceae</taxon>
        <taxon>Sclerotinia</taxon>
    </lineage>
</organism>
<protein>
    <recommendedName>
        <fullName>Required for respiratory growth protein 9, mitochondrial</fullName>
    </recommendedName>
</protein>
<gene>
    <name type="primary">rrg9</name>
    <name type="ORF">SS1G_05343</name>
</gene>
<proteinExistence type="inferred from homology"/>
<keyword id="KW-0496">Mitochondrion</keyword>
<keyword id="KW-1185">Reference proteome</keyword>
<keyword id="KW-0809">Transit peptide</keyword>
<name>RRG9_SCLS1</name>
<accession>A7EJ50</accession>
<dbReference type="EMBL" id="CH476626">
    <property type="protein sequence ID" value="EDO02866.1"/>
    <property type="molecule type" value="Genomic_DNA"/>
</dbReference>
<dbReference type="RefSeq" id="XP_001593915.1">
    <property type="nucleotide sequence ID" value="XM_001593865.1"/>
</dbReference>
<dbReference type="SMR" id="A7EJ50"/>
<dbReference type="STRING" id="665079.A7EJ50"/>
<dbReference type="EnsemblFungi" id="EDO02866">
    <property type="protein sequence ID" value="EDO02866"/>
    <property type="gene ID" value="SS1G_05343"/>
</dbReference>
<dbReference type="GeneID" id="5489794"/>
<dbReference type="KEGG" id="ssl:SS1G_05343"/>
<dbReference type="VEuPathDB" id="FungiDB:sscle_08g066060"/>
<dbReference type="eggNOG" id="ENOG502S7IA">
    <property type="taxonomic scope" value="Eukaryota"/>
</dbReference>
<dbReference type="HOGENOM" id="CLU_047598_0_0_1"/>
<dbReference type="InParanoid" id="A7EJ50"/>
<dbReference type="OMA" id="ATEGHIN"/>
<dbReference type="OrthoDB" id="5578174at2759"/>
<dbReference type="Proteomes" id="UP000001312">
    <property type="component" value="Unassembled WGS sequence"/>
</dbReference>
<dbReference type="GO" id="GO:0005739">
    <property type="term" value="C:mitochondrion"/>
    <property type="evidence" value="ECO:0007669"/>
    <property type="project" value="UniProtKB-SubCell"/>
</dbReference>
<dbReference type="GO" id="GO:0005634">
    <property type="term" value="C:nucleus"/>
    <property type="evidence" value="ECO:0000318"/>
    <property type="project" value="GO_Central"/>
</dbReference>
<dbReference type="InterPro" id="IPR010487">
    <property type="entry name" value="NGRN/Rrg9"/>
</dbReference>
<dbReference type="PANTHER" id="PTHR13475">
    <property type="entry name" value="NEUGRIN"/>
    <property type="match status" value="1"/>
</dbReference>
<dbReference type="PANTHER" id="PTHR13475:SF3">
    <property type="entry name" value="NEUGRIN"/>
    <property type="match status" value="1"/>
</dbReference>
<dbReference type="Pfam" id="PF06413">
    <property type="entry name" value="Neugrin"/>
    <property type="match status" value="1"/>
</dbReference>
<sequence>MSCSCTKRTLQLFIRNVAQVELAASSTSTYPPQRTNFQRFNVPSLPSLHPSHSRAYWSAYSSEPRRDTVEDAPIENQEGPPSATEGHINTTPEKIDDMDDLFMEITPESLDALAAETSSGLANSQSRESKELKQPWQAEKSRKFIDPEETTEETWTQGEPIDIFSKPMKKPRWDKPVESLRFRSIKIDNAVAVPYSPQASTSKRNMVRDDWTPPDRKTWMEQKAALKEKFPEGWKPMKKLSPEAQAGIRALHAQYPEQYSTPALADRFQVSPEAIRRILRTKWVPKPEEEADRERRWFQRGKSVWGRYAELGVKPPKRWREEGIGRGKPEWKKRAAPVLTTSRPGTSEPRRPETISLDDQMEDRIF</sequence>
<feature type="transit peptide" description="Mitochondrion" evidence="2">
    <location>
        <begin position="1"/>
        <end position="40"/>
    </location>
</feature>
<feature type="chain" id="PRO_0000407964" description="Required for respiratory growth protein 9, mitochondrial">
    <location>
        <begin position="41"/>
        <end position="366"/>
    </location>
</feature>
<feature type="region of interest" description="Disordered" evidence="3">
    <location>
        <begin position="72"/>
        <end position="91"/>
    </location>
</feature>
<feature type="region of interest" description="Disordered" evidence="3">
    <location>
        <begin position="115"/>
        <end position="139"/>
    </location>
</feature>
<feature type="region of interest" description="Disordered" evidence="3">
    <location>
        <begin position="316"/>
        <end position="366"/>
    </location>
</feature>
<feature type="compositionally biased region" description="Polar residues" evidence="3">
    <location>
        <begin position="116"/>
        <end position="126"/>
    </location>
</feature>
<feature type="compositionally biased region" description="Basic and acidic residues" evidence="3">
    <location>
        <begin position="127"/>
        <end position="139"/>
    </location>
</feature>
<feature type="compositionally biased region" description="Basic and acidic residues" evidence="3">
    <location>
        <begin position="318"/>
        <end position="333"/>
    </location>
</feature>
<reference key="1">
    <citation type="journal article" date="2011" name="PLoS Genet.">
        <title>Genomic analysis of the necrotrophic fungal pathogens Sclerotinia sclerotiorum and Botrytis cinerea.</title>
        <authorList>
            <person name="Amselem J."/>
            <person name="Cuomo C.A."/>
            <person name="van Kan J.A.L."/>
            <person name="Viaud M."/>
            <person name="Benito E.P."/>
            <person name="Couloux A."/>
            <person name="Coutinho P.M."/>
            <person name="de Vries R.P."/>
            <person name="Dyer P.S."/>
            <person name="Fillinger S."/>
            <person name="Fournier E."/>
            <person name="Gout L."/>
            <person name="Hahn M."/>
            <person name="Kohn L."/>
            <person name="Lapalu N."/>
            <person name="Plummer K.M."/>
            <person name="Pradier J.-M."/>
            <person name="Quevillon E."/>
            <person name="Sharon A."/>
            <person name="Simon A."/>
            <person name="ten Have A."/>
            <person name="Tudzynski B."/>
            <person name="Tudzynski P."/>
            <person name="Wincker P."/>
            <person name="Andrew M."/>
            <person name="Anthouard V."/>
            <person name="Beever R.E."/>
            <person name="Beffa R."/>
            <person name="Benoit I."/>
            <person name="Bouzid O."/>
            <person name="Brault B."/>
            <person name="Chen Z."/>
            <person name="Choquer M."/>
            <person name="Collemare J."/>
            <person name="Cotton P."/>
            <person name="Danchin E.G."/>
            <person name="Da Silva C."/>
            <person name="Gautier A."/>
            <person name="Giraud C."/>
            <person name="Giraud T."/>
            <person name="Gonzalez C."/>
            <person name="Grossetete S."/>
            <person name="Gueldener U."/>
            <person name="Henrissat B."/>
            <person name="Howlett B.J."/>
            <person name="Kodira C."/>
            <person name="Kretschmer M."/>
            <person name="Lappartient A."/>
            <person name="Leroch M."/>
            <person name="Levis C."/>
            <person name="Mauceli E."/>
            <person name="Neuveglise C."/>
            <person name="Oeser B."/>
            <person name="Pearson M."/>
            <person name="Poulain J."/>
            <person name="Poussereau N."/>
            <person name="Quesneville H."/>
            <person name="Rascle C."/>
            <person name="Schumacher J."/>
            <person name="Segurens B."/>
            <person name="Sexton A."/>
            <person name="Silva E."/>
            <person name="Sirven C."/>
            <person name="Soanes D.M."/>
            <person name="Talbot N.J."/>
            <person name="Templeton M."/>
            <person name="Yandava C."/>
            <person name="Yarden O."/>
            <person name="Zeng Q."/>
            <person name="Rollins J.A."/>
            <person name="Lebrun M.-H."/>
            <person name="Dickman M."/>
        </authorList>
    </citation>
    <scope>NUCLEOTIDE SEQUENCE [LARGE SCALE GENOMIC DNA]</scope>
    <source>
        <strain>ATCC 18683 / 1980 / Ss-1</strain>
    </source>
</reference>